<accession>A9BJZ0</accession>
<comment type="function">
    <text evidence="1">Carrier of the growing fatty acid chain in fatty acid biosynthesis.</text>
</comment>
<comment type="pathway">
    <text evidence="1">Lipid metabolism; fatty acid biosynthesis.</text>
</comment>
<comment type="subcellular location">
    <subcellularLocation>
        <location evidence="1">Cytoplasm</location>
    </subcellularLocation>
</comment>
<comment type="PTM">
    <text evidence="1">4'-phosphopantetheine is transferred from CoA to a specific serine of apo-ACP by AcpS. This modification is essential for activity because fatty acids are bound in thioester linkage to the sulfhydryl of the prosthetic group.</text>
</comment>
<comment type="similarity">
    <text evidence="1">Belongs to the acyl carrier protein (ACP) family.</text>
</comment>
<reference key="1">
    <citation type="submission" date="2007-11" db="EMBL/GenBank/DDBJ databases">
        <title>Complete sequence of Petroga mobilis SJ95.</title>
        <authorList>
            <consortium name="US DOE Joint Genome Institute"/>
            <person name="Copeland A."/>
            <person name="Lucas S."/>
            <person name="Lapidus A."/>
            <person name="Barry K."/>
            <person name="Glavina del Rio T."/>
            <person name="Dalin E."/>
            <person name="Tice H."/>
            <person name="Pitluck S."/>
            <person name="Meincke L."/>
            <person name="Brettin T."/>
            <person name="Bruce D."/>
            <person name="Detter J.C."/>
            <person name="Han C."/>
            <person name="Kuske C.R."/>
            <person name="Schmutz J."/>
            <person name="Larimer F."/>
            <person name="Land M."/>
            <person name="Hauser L."/>
            <person name="Kyrpides N."/>
            <person name="Mikhailova N."/>
            <person name="Noll K."/>
            <person name="Richardson P."/>
        </authorList>
    </citation>
    <scope>NUCLEOTIDE SEQUENCE [LARGE SCALE GENOMIC DNA]</scope>
    <source>
        <strain>DSM 10674 / SJ95</strain>
    </source>
</reference>
<organism>
    <name type="scientific">Petrotoga mobilis (strain DSM 10674 / SJ95)</name>
    <dbReference type="NCBI Taxonomy" id="403833"/>
    <lineage>
        <taxon>Bacteria</taxon>
        <taxon>Thermotogati</taxon>
        <taxon>Thermotogota</taxon>
        <taxon>Thermotogae</taxon>
        <taxon>Petrotogales</taxon>
        <taxon>Petrotogaceae</taxon>
        <taxon>Petrotoga</taxon>
    </lineage>
</organism>
<keyword id="KW-0963">Cytoplasm</keyword>
<keyword id="KW-0275">Fatty acid biosynthesis</keyword>
<keyword id="KW-0276">Fatty acid metabolism</keyword>
<keyword id="KW-0444">Lipid biosynthesis</keyword>
<keyword id="KW-0443">Lipid metabolism</keyword>
<keyword id="KW-0596">Phosphopantetheine</keyword>
<keyword id="KW-0597">Phosphoprotein</keyword>
<proteinExistence type="inferred from homology"/>
<name>ACP_PETMO</name>
<evidence type="ECO:0000255" key="1">
    <source>
        <dbReference type="HAMAP-Rule" id="MF_01217"/>
    </source>
</evidence>
<evidence type="ECO:0000255" key="2">
    <source>
        <dbReference type="PROSITE-ProRule" id="PRU00258"/>
    </source>
</evidence>
<gene>
    <name evidence="1" type="primary">acpP</name>
    <name type="ordered locus">Pmob_1011</name>
</gene>
<dbReference type="EMBL" id="CP000879">
    <property type="protein sequence ID" value="ABX31733.1"/>
    <property type="molecule type" value="Genomic_DNA"/>
</dbReference>
<dbReference type="RefSeq" id="WP_012208836.1">
    <property type="nucleotide sequence ID" value="NC_010003.1"/>
</dbReference>
<dbReference type="SMR" id="A9BJZ0"/>
<dbReference type="STRING" id="403833.Pmob_1011"/>
<dbReference type="KEGG" id="pmo:Pmob_1011"/>
<dbReference type="eggNOG" id="COG0236">
    <property type="taxonomic scope" value="Bacteria"/>
</dbReference>
<dbReference type="HOGENOM" id="CLU_108696_5_1_0"/>
<dbReference type="OrthoDB" id="9804551at2"/>
<dbReference type="UniPathway" id="UPA00094"/>
<dbReference type="Proteomes" id="UP000000789">
    <property type="component" value="Chromosome"/>
</dbReference>
<dbReference type="GO" id="GO:0005829">
    <property type="term" value="C:cytosol"/>
    <property type="evidence" value="ECO:0007669"/>
    <property type="project" value="TreeGrafter"/>
</dbReference>
<dbReference type="GO" id="GO:0016020">
    <property type="term" value="C:membrane"/>
    <property type="evidence" value="ECO:0007669"/>
    <property type="project" value="GOC"/>
</dbReference>
<dbReference type="GO" id="GO:0000035">
    <property type="term" value="F:acyl binding"/>
    <property type="evidence" value="ECO:0007669"/>
    <property type="project" value="TreeGrafter"/>
</dbReference>
<dbReference type="GO" id="GO:0000036">
    <property type="term" value="F:acyl carrier activity"/>
    <property type="evidence" value="ECO:0007669"/>
    <property type="project" value="UniProtKB-UniRule"/>
</dbReference>
<dbReference type="GO" id="GO:0009245">
    <property type="term" value="P:lipid A biosynthetic process"/>
    <property type="evidence" value="ECO:0007669"/>
    <property type="project" value="TreeGrafter"/>
</dbReference>
<dbReference type="Gene3D" id="1.10.1200.10">
    <property type="entry name" value="ACP-like"/>
    <property type="match status" value="1"/>
</dbReference>
<dbReference type="HAMAP" id="MF_01217">
    <property type="entry name" value="Acyl_carrier"/>
    <property type="match status" value="1"/>
</dbReference>
<dbReference type="InterPro" id="IPR003231">
    <property type="entry name" value="ACP"/>
</dbReference>
<dbReference type="InterPro" id="IPR036736">
    <property type="entry name" value="ACP-like_sf"/>
</dbReference>
<dbReference type="InterPro" id="IPR009081">
    <property type="entry name" value="PP-bd_ACP"/>
</dbReference>
<dbReference type="NCBIfam" id="TIGR00517">
    <property type="entry name" value="acyl_carrier"/>
    <property type="match status" value="1"/>
</dbReference>
<dbReference type="NCBIfam" id="NF002148">
    <property type="entry name" value="PRK00982.1-2"/>
    <property type="match status" value="1"/>
</dbReference>
<dbReference type="NCBIfam" id="NF002150">
    <property type="entry name" value="PRK00982.1-4"/>
    <property type="match status" value="1"/>
</dbReference>
<dbReference type="PANTHER" id="PTHR20863">
    <property type="entry name" value="ACYL CARRIER PROTEIN"/>
    <property type="match status" value="1"/>
</dbReference>
<dbReference type="PANTHER" id="PTHR20863:SF76">
    <property type="entry name" value="CARRIER DOMAIN-CONTAINING PROTEIN"/>
    <property type="match status" value="1"/>
</dbReference>
<dbReference type="Pfam" id="PF00550">
    <property type="entry name" value="PP-binding"/>
    <property type="match status" value="1"/>
</dbReference>
<dbReference type="SUPFAM" id="SSF47336">
    <property type="entry name" value="ACP-like"/>
    <property type="match status" value="1"/>
</dbReference>
<dbReference type="PROSITE" id="PS50075">
    <property type="entry name" value="CARRIER"/>
    <property type="match status" value="1"/>
</dbReference>
<protein>
    <recommendedName>
        <fullName evidence="1">Acyl carrier protein</fullName>
        <shortName evidence="1">ACP</shortName>
    </recommendedName>
</protein>
<sequence>MTKDELFEKVKEIIVDTLSVDEDEVTLDASFTDDLDADSLELVDLTMAFESEFGVTIEDEELEKIKTVENAVNLLSEKLNIDDED</sequence>
<feature type="chain" id="PRO_1000164797" description="Acyl carrier protein">
    <location>
        <begin position="1"/>
        <end position="85"/>
    </location>
</feature>
<feature type="domain" description="Carrier" evidence="2">
    <location>
        <begin position="4"/>
        <end position="79"/>
    </location>
</feature>
<feature type="modified residue" description="O-(pantetheine 4'-phosphoryl)serine" evidence="2">
    <location>
        <position position="39"/>
    </location>
</feature>